<name>CHED1_RUEST</name>
<evidence type="ECO:0000255" key="1">
    <source>
        <dbReference type="HAMAP-Rule" id="MF_01440"/>
    </source>
</evidence>
<geneLocation type="plasmid">
    <name>megaplasmid TM1040</name>
</geneLocation>
<keyword id="KW-0145">Chemotaxis</keyword>
<keyword id="KW-0378">Hydrolase</keyword>
<keyword id="KW-0614">Plasmid</keyword>
<keyword id="KW-1185">Reference proteome</keyword>
<proteinExistence type="inferred from homology"/>
<accession>Q1GMD1</accession>
<dbReference type="EC" id="3.5.1.44" evidence="1"/>
<dbReference type="EMBL" id="CP000376">
    <property type="protein sequence ID" value="ABF62185.1"/>
    <property type="molecule type" value="Genomic_DNA"/>
</dbReference>
<dbReference type="RefSeq" id="WP_011536829.1">
    <property type="nucleotide sequence ID" value="NC_008043.1"/>
</dbReference>
<dbReference type="SMR" id="Q1GMD1"/>
<dbReference type="KEGG" id="sit:TM1040_3211"/>
<dbReference type="HOGENOM" id="CLU_087854_0_1_5"/>
<dbReference type="OrthoDB" id="9807202at2"/>
<dbReference type="Proteomes" id="UP000000636">
    <property type="component" value="Plasmid megaplasmid TM1040"/>
</dbReference>
<dbReference type="GO" id="GO:0050568">
    <property type="term" value="F:protein-glutamine glutaminase activity"/>
    <property type="evidence" value="ECO:0007669"/>
    <property type="project" value="UniProtKB-UniRule"/>
</dbReference>
<dbReference type="GO" id="GO:0006935">
    <property type="term" value="P:chemotaxis"/>
    <property type="evidence" value="ECO:0007669"/>
    <property type="project" value="UniProtKB-UniRule"/>
</dbReference>
<dbReference type="CDD" id="cd16352">
    <property type="entry name" value="CheD"/>
    <property type="match status" value="1"/>
</dbReference>
<dbReference type="Gene3D" id="3.30.1330.200">
    <property type="match status" value="1"/>
</dbReference>
<dbReference type="HAMAP" id="MF_01440">
    <property type="entry name" value="CheD"/>
    <property type="match status" value="1"/>
</dbReference>
<dbReference type="InterPro" id="IPR038592">
    <property type="entry name" value="CheD-like_sf"/>
</dbReference>
<dbReference type="InterPro" id="IPR005659">
    <property type="entry name" value="Chemorcpt_Glu_NH3ase_CheD"/>
</dbReference>
<dbReference type="InterPro" id="IPR011324">
    <property type="entry name" value="Cytotoxic_necrot_fac-like_cat"/>
</dbReference>
<dbReference type="PANTHER" id="PTHR35147:SF3">
    <property type="entry name" value="CHEMORECEPTOR GLUTAMINE DEAMIDASE CHED 1-RELATED"/>
    <property type="match status" value="1"/>
</dbReference>
<dbReference type="PANTHER" id="PTHR35147">
    <property type="entry name" value="CHEMORECEPTOR GLUTAMINE DEAMIDASE CHED-RELATED"/>
    <property type="match status" value="1"/>
</dbReference>
<dbReference type="Pfam" id="PF03975">
    <property type="entry name" value="CheD"/>
    <property type="match status" value="1"/>
</dbReference>
<dbReference type="SUPFAM" id="SSF64438">
    <property type="entry name" value="CNF1/YfiH-like putative cysteine hydrolases"/>
    <property type="match status" value="1"/>
</dbReference>
<comment type="function">
    <text evidence="1">Probably deamidates glutamine residues to glutamate on methyl-accepting chemotaxis receptors (MCPs), playing an important role in chemotaxis.</text>
</comment>
<comment type="catalytic activity">
    <reaction evidence="1">
        <text>L-glutaminyl-[protein] + H2O = L-glutamyl-[protein] + NH4(+)</text>
        <dbReference type="Rhea" id="RHEA:16441"/>
        <dbReference type="Rhea" id="RHEA-COMP:10207"/>
        <dbReference type="Rhea" id="RHEA-COMP:10208"/>
        <dbReference type="ChEBI" id="CHEBI:15377"/>
        <dbReference type="ChEBI" id="CHEBI:28938"/>
        <dbReference type="ChEBI" id="CHEBI:29973"/>
        <dbReference type="ChEBI" id="CHEBI:30011"/>
        <dbReference type="EC" id="3.5.1.44"/>
    </reaction>
</comment>
<comment type="similarity">
    <text evidence="1">Belongs to the CheD family.</text>
</comment>
<reference key="1">
    <citation type="submission" date="2006-05" db="EMBL/GenBank/DDBJ databases">
        <title>Complete sequence of megaplasmid of Silicibacter sp. TM1040.</title>
        <authorList>
            <consortium name="US DOE Joint Genome Institute"/>
            <person name="Copeland A."/>
            <person name="Lucas S."/>
            <person name="Lapidus A."/>
            <person name="Barry K."/>
            <person name="Detter J.C."/>
            <person name="Glavina del Rio T."/>
            <person name="Hammon N."/>
            <person name="Israni S."/>
            <person name="Dalin E."/>
            <person name="Tice H."/>
            <person name="Pitluck S."/>
            <person name="Brettin T."/>
            <person name="Bruce D."/>
            <person name="Han C."/>
            <person name="Tapia R."/>
            <person name="Goodwin L."/>
            <person name="Thompson L.S."/>
            <person name="Gilna P."/>
            <person name="Schmutz J."/>
            <person name="Larimer F."/>
            <person name="Land M."/>
            <person name="Hauser L."/>
            <person name="Kyrpides N."/>
            <person name="Kim E."/>
            <person name="Belas R."/>
            <person name="Moran M.A."/>
            <person name="Buchan A."/>
            <person name="Gonzalez J.M."/>
            <person name="Schell M.A."/>
            <person name="Sun F."/>
            <person name="Richardson P."/>
        </authorList>
    </citation>
    <scope>NUCLEOTIDE SEQUENCE [LARGE SCALE GENOMIC DNA]</scope>
    <source>
        <strain>TM1040</strain>
    </source>
</reference>
<organism>
    <name type="scientific">Ruegeria sp. (strain TM1040)</name>
    <name type="common">Silicibacter sp.</name>
    <dbReference type="NCBI Taxonomy" id="292414"/>
    <lineage>
        <taxon>Bacteria</taxon>
        <taxon>Pseudomonadati</taxon>
        <taxon>Pseudomonadota</taxon>
        <taxon>Alphaproteobacteria</taxon>
        <taxon>Rhodobacterales</taxon>
        <taxon>Roseobacteraceae</taxon>
        <taxon>Ruegeria</taxon>
    </lineage>
</organism>
<feature type="chain" id="PRO_0000251066" description="Probable chemoreceptor glutamine deamidase CheD 1">
    <location>
        <begin position="1"/>
        <end position="187"/>
    </location>
</feature>
<sequence length="187" mass="19591">MSNVFQNTSTVTVLQGDYKVTTDPKVVFSTVLGSCIAACIYDEQVGVGGMNHFLLASSAGSGGVSARYGVHAMELLINGIMKKGALRSNLKAKVFGGAKMSANLSDIGANNADFVQRFLRDEGIPVISSSVGGTSARRVRFHACSGAAQQTHVADDRRLGEEERAAVARTQAAPARKPAAADNVTLF</sequence>
<gene>
    <name evidence="1" type="primary">cheD1</name>
    <name type="ordered locus">TM1040_3211</name>
</gene>
<protein>
    <recommendedName>
        <fullName evidence="1">Probable chemoreceptor glutamine deamidase CheD 1</fullName>
        <ecNumber evidence="1">3.5.1.44</ecNumber>
    </recommendedName>
</protein>